<sequence>MTELFIDGAWRDGAGPVFASRNPGTGEPVWEGAGASADDVERAVASARRAFAAWSALDLDARCAIVKRFAALLVERKEALATMIGRETGKPLWEARTEVASMAAKVDVSIAAYHERTGERRSPTADGVAVLRHRPHGVVAVFGPYNFPGHLPNGHIVPALIAGNTVVFKPSELAPGVARATVEIWRDAGLPAGVLNLVQGEKDTGVALANHRQIDGLFFTGSSDTGTLLHRQFGGRPEIVLALEMGGNNPLVVADVEDIDAAVHHAIQSAFLSAGQRCTCARRILVPRGAFGDRFLERFADVASRITADVYDADPQPFMGAVISARAASRLVAAQAKLLELGAAPIIEMRQRDPALGFVNASILDVTPVRELPDEEHFGPLAQIVRYTDLDDAIARANDTAFGLSAGLLADDETVWNTFRRTIRAGIVNWNRPTNGASSAAPFGGAGRSGNHRPSAYYAADYCAYPMASVESAQLQMPANLSPGLHF</sequence>
<dbReference type="EC" id="1.2.1.71" evidence="1"/>
<dbReference type="EMBL" id="CP000526">
    <property type="protein sequence ID" value="ABM50845.1"/>
    <property type="molecule type" value="Genomic_DNA"/>
</dbReference>
<dbReference type="RefSeq" id="WP_004193383.1">
    <property type="nucleotide sequence ID" value="NC_008785.1"/>
</dbReference>
<dbReference type="SMR" id="A1V675"/>
<dbReference type="GeneID" id="92978363"/>
<dbReference type="KEGG" id="bmv:BMASAVP1_A2422"/>
<dbReference type="HOGENOM" id="CLU_005391_1_0_4"/>
<dbReference type="UniPathway" id="UPA00185">
    <property type="reaction ID" value="UER00282"/>
</dbReference>
<dbReference type="GO" id="GO:0043824">
    <property type="term" value="F:succinylglutamate-semialdehyde dehydrogenase activity"/>
    <property type="evidence" value="ECO:0007669"/>
    <property type="project" value="UniProtKB-EC"/>
</dbReference>
<dbReference type="GO" id="GO:0019544">
    <property type="term" value="P:arginine catabolic process to glutamate"/>
    <property type="evidence" value="ECO:0007669"/>
    <property type="project" value="UniProtKB-UniRule"/>
</dbReference>
<dbReference type="GO" id="GO:0019545">
    <property type="term" value="P:arginine catabolic process to succinate"/>
    <property type="evidence" value="ECO:0007669"/>
    <property type="project" value="UniProtKB-UniRule"/>
</dbReference>
<dbReference type="CDD" id="cd07095">
    <property type="entry name" value="ALDH_SGSD_AstD"/>
    <property type="match status" value="1"/>
</dbReference>
<dbReference type="FunFam" id="3.40.605.10:FF:000010">
    <property type="entry name" value="N-succinylglutamate 5-semialdehyde dehydrogenase"/>
    <property type="match status" value="1"/>
</dbReference>
<dbReference type="Gene3D" id="3.40.605.10">
    <property type="entry name" value="Aldehyde Dehydrogenase, Chain A, domain 1"/>
    <property type="match status" value="1"/>
</dbReference>
<dbReference type="Gene3D" id="3.40.309.10">
    <property type="entry name" value="Aldehyde Dehydrogenase, Chain A, domain 2"/>
    <property type="match status" value="1"/>
</dbReference>
<dbReference type="HAMAP" id="MF_01174">
    <property type="entry name" value="Aldedh_AstD"/>
    <property type="match status" value="1"/>
</dbReference>
<dbReference type="InterPro" id="IPR016161">
    <property type="entry name" value="Ald_DH/histidinol_DH"/>
</dbReference>
<dbReference type="InterPro" id="IPR016163">
    <property type="entry name" value="Ald_DH_C"/>
</dbReference>
<dbReference type="InterPro" id="IPR016160">
    <property type="entry name" value="Ald_DH_CS_CYS"/>
</dbReference>
<dbReference type="InterPro" id="IPR029510">
    <property type="entry name" value="Ald_DH_CS_GLU"/>
</dbReference>
<dbReference type="InterPro" id="IPR016162">
    <property type="entry name" value="Ald_DH_N"/>
</dbReference>
<dbReference type="InterPro" id="IPR015590">
    <property type="entry name" value="Aldehyde_DH_dom"/>
</dbReference>
<dbReference type="InterPro" id="IPR017649">
    <property type="entry name" value="SuccinylGlu_semiald_DH_AstD"/>
</dbReference>
<dbReference type="NCBIfam" id="TIGR03240">
    <property type="entry name" value="arg_catab_astD"/>
    <property type="match status" value="1"/>
</dbReference>
<dbReference type="NCBIfam" id="NF006992">
    <property type="entry name" value="PRK09457.1"/>
    <property type="match status" value="1"/>
</dbReference>
<dbReference type="PANTHER" id="PTHR11699">
    <property type="entry name" value="ALDEHYDE DEHYDROGENASE-RELATED"/>
    <property type="match status" value="1"/>
</dbReference>
<dbReference type="Pfam" id="PF00171">
    <property type="entry name" value="Aldedh"/>
    <property type="match status" value="1"/>
</dbReference>
<dbReference type="SUPFAM" id="SSF53720">
    <property type="entry name" value="ALDH-like"/>
    <property type="match status" value="1"/>
</dbReference>
<dbReference type="PROSITE" id="PS00070">
    <property type="entry name" value="ALDEHYDE_DEHYDR_CYS"/>
    <property type="match status" value="1"/>
</dbReference>
<dbReference type="PROSITE" id="PS00687">
    <property type="entry name" value="ALDEHYDE_DEHYDR_GLU"/>
    <property type="match status" value="1"/>
</dbReference>
<comment type="function">
    <text evidence="1">Catalyzes the NAD-dependent reduction of succinylglutamate semialdehyde into succinylglutamate.</text>
</comment>
<comment type="catalytic activity">
    <reaction evidence="1">
        <text>N-succinyl-L-glutamate 5-semialdehyde + NAD(+) + H2O = N-succinyl-L-glutamate + NADH + 2 H(+)</text>
        <dbReference type="Rhea" id="RHEA:10812"/>
        <dbReference type="ChEBI" id="CHEBI:15377"/>
        <dbReference type="ChEBI" id="CHEBI:15378"/>
        <dbReference type="ChEBI" id="CHEBI:57540"/>
        <dbReference type="ChEBI" id="CHEBI:57945"/>
        <dbReference type="ChEBI" id="CHEBI:58520"/>
        <dbReference type="ChEBI" id="CHEBI:58763"/>
        <dbReference type="EC" id="1.2.1.71"/>
    </reaction>
</comment>
<comment type="pathway">
    <text evidence="1">Amino-acid degradation; L-arginine degradation via AST pathway; L-glutamate and succinate from L-arginine: step 4/5.</text>
</comment>
<comment type="similarity">
    <text evidence="1">Belongs to the aldehyde dehydrogenase family. AstD subfamily.</text>
</comment>
<organism>
    <name type="scientific">Burkholderia mallei (strain SAVP1)</name>
    <dbReference type="NCBI Taxonomy" id="320388"/>
    <lineage>
        <taxon>Bacteria</taxon>
        <taxon>Pseudomonadati</taxon>
        <taxon>Pseudomonadota</taxon>
        <taxon>Betaproteobacteria</taxon>
        <taxon>Burkholderiales</taxon>
        <taxon>Burkholderiaceae</taxon>
        <taxon>Burkholderia</taxon>
        <taxon>pseudomallei group</taxon>
    </lineage>
</organism>
<accession>A1V675</accession>
<feature type="chain" id="PRO_1000065749" description="N-succinylglutamate 5-semialdehyde dehydrogenase">
    <location>
        <begin position="1"/>
        <end position="487"/>
    </location>
</feature>
<feature type="active site" evidence="1">
    <location>
        <position position="244"/>
    </location>
</feature>
<feature type="active site" evidence="1">
    <location>
        <position position="278"/>
    </location>
</feature>
<feature type="binding site" evidence="1">
    <location>
        <begin position="221"/>
        <end position="226"/>
    </location>
    <ligand>
        <name>NAD(+)</name>
        <dbReference type="ChEBI" id="CHEBI:57540"/>
    </ligand>
</feature>
<gene>
    <name evidence="1" type="primary">astD</name>
    <name type="ordered locus">BMASAVP1_A2422</name>
</gene>
<protein>
    <recommendedName>
        <fullName evidence="1">N-succinylglutamate 5-semialdehyde dehydrogenase</fullName>
        <ecNumber evidence="1">1.2.1.71</ecNumber>
    </recommendedName>
    <alternativeName>
        <fullName evidence="1">Succinylglutamic semialdehyde dehydrogenase</fullName>
        <shortName evidence="1">SGSD</shortName>
    </alternativeName>
</protein>
<proteinExistence type="inferred from homology"/>
<name>ASTD_BURMS</name>
<keyword id="KW-0056">Arginine metabolism</keyword>
<keyword id="KW-0520">NAD</keyword>
<keyword id="KW-0560">Oxidoreductase</keyword>
<reference key="1">
    <citation type="journal article" date="2010" name="Genome Biol. Evol.">
        <title>Continuing evolution of Burkholderia mallei through genome reduction and large-scale rearrangements.</title>
        <authorList>
            <person name="Losada L."/>
            <person name="Ronning C.M."/>
            <person name="DeShazer D."/>
            <person name="Woods D."/>
            <person name="Fedorova N."/>
            <person name="Kim H.S."/>
            <person name="Shabalina S.A."/>
            <person name="Pearson T.R."/>
            <person name="Brinkac L."/>
            <person name="Tan P."/>
            <person name="Nandi T."/>
            <person name="Crabtree J."/>
            <person name="Badger J."/>
            <person name="Beckstrom-Sternberg S."/>
            <person name="Saqib M."/>
            <person name="Schutzer S.E."/>
            <person name="Keim P."/>
            <person name="Nierman W.C."/>
        </authorList>
    </citation>
    <scope>NUCLEOTIDE SEQUENCE [LARGE SCALE GENOMIC DNA]</scope>
    <source>
        <strain>SAVP1</strain>
    </source>
</reference>
<evidence type="ECO:0000255" key="1">
    <source>
        <dbReference type="HAMAP-Rule" id="MF_01174"/>
    </source>
</evidence>